<keyword id="KW-1185">Reference proteome</keyword>
<keyword id="KW-0732">Signal</keyword>
<comment type="similarity">
    <text evidence="3">Belongs to the UPF0540 family.</text>
</comment>
<proteinExistence type="evidence at transcript level"/>
<accession>O04587</accession>
<name>U540D_ARATH</name>
<protein>
    <recommendedName>
        <fullName>UPF0540 protein At1g62220</fullName>
    </recommendedName>
</protein>
<gene>
    <name type="ordered locus">At1g62220</name>
    <name type="ORF">F19K23.15</name>
</gene>
<organism>
    <name type="scientific">Arabidopsis thaliana</name>
    <name type="common">Mouse-ear cress</name>
    <dbReference type="NCBI Taxonomy" id="3702"/>
    <lineage>
        <taxon>Eukaryota</taxon>
        <taxon>Viridiplantae</taxon>
        <taxon>Streptophyta</taxon>
        <taxon>Embryophyta</taxon>
        <taxon>Tracheophyta</taxon>
        <taxon>Spermatophyta</taxon>
        <taxon>Magnoliopsida</taxon>
        <taxon>eudicotyledons</taxon>
        <taxon>Gunneridae</taxon>
        <taxon>Pentapetalae</taxon>
        <taxon>rosids</taxon>
        <taxon>malvids</taxon>
        <taxon>Brassicales</taxon>
        <taxon>Brassicaceae</taxon>
        <taxon>Camelineae</taxon>
        <taxon>Arabidopsis</taxon>
    </lineage>
</organism>
<feature type="signal peptide" evidence="1">
    <location>
        <begin position="1"/>
        <end position="21"/>
    </location>
</feature>
<feature type="chain" id="PRO_0000326472" description="UPF0540 protein At1g62220">
    <location>
        <begin position="22"/>
        <end position="153"/>
    </location>
</feature>
<feature type="region of interest" description="Disordered" evidence="2">
    <location>
        <begin position="63"/>
        <end position="82"/>
    </location>
</feature>
<feature type="region of interest" description="Disordered" evidence="2">
    <location>
        <begin position="122"/>
        <end position="153"/>
    </location>
</feature>
<feature type="compositionally biased region" description="Low complexity" evidence="2">
    <location>
        <begin position="122"/>
        <end position="132"/>
    </location>
</feature>
<feature type="compositionally biased region" description="Basic residues" evidence="2">
    <location>
        <begin position="141"/>
        <end position="153"/>
    </location>
</feature>
<dbReference type="EMBL" id="AC000375">
    <property type="protein sequence ID" value="AAB60768.1"/>
    <property type="molecule type" value="Genomic_DNA"/>
</dbReference>
<dbReference type="EMBL" id="CP002684">
    <property type="protein sequence ID" value="AEE33937.1"/>
    <property type="molecule type" value="Genomic_DNA"/>
</dbReference>
<dbReference type="EMBL" id="BT002422">
    <property type="protein sequence ID" value="AAO00782.1"/>
    <property type="molecule type" value="mRNA"/>
</dbReference>
<dbReference type="EMBL" id="BT021993">
    <property type="protein sequence ID" value="AAY25405.1"/>
    <property type="molecule type" value="mRNA"/>
</dbReference>
<dbReference type="PIR" id="G96648">
    <property type="entry name" value="G96648"/>
</dbReference>
<dbReference type="RefSeq" id="NP_176413.1">
    <property type="nucleotide sequence ID" value="NM_104903.2"/>
</dbReference>
<dbReference type="SMR" id="O04587"/>
<dbReference type="PaxDb" id="3702-AT1G62220.1"/>
<dbReference type="ProteomicsDB" id="242607"/>
<dbReference type="EnsemblPlants" id="AT1G62220.1">
    <property type="protein sequence ID" value="AT1G62220.1"/>
    <property type="gene ID" value="AT1G62220"/>
</dbReference>
<dbReference type="GeneID" id="842518"/>
<dbReference type="Gramene" id="AT1G62220.1">
    <property type="protein sequence ID" value="AT1G62220.1"/>
    <property type="gene ID" value="AT1G62220"/>
</dbReference>
<dbReference type="KEGG" id="ath:AT1G62220"/>
<dbReference type="Araport" id="AT1G62220"/>
<dbReference type="TAIR" id="AT1G62220"/>
<dbReference type="HOGENOM" id="CLU_1770577_0_0_1"/>
<dbReference type="InParanoid" id="O04587"/>
<dbReference type="OrthoDB" id="1113718at2759"/>
<dbReference type="PhylomeDB" id="O04587"/>
<dbReference type="PRO" id="PR:O04587"/>
<dbReference type="Proteomes" id="UP000006548">
    <property type="component" value="Chromosome 1"/>
</dbReference>
<dbReference type="ExpressionAtlas" id="O04587">
    <property type="expression patterns" value="baseline and differential"/>
</dbReference>
<dbReference type="GO" id="GO:0010192">
    <property type="term" value="P:mucilage biosynthetic process"/>
    <property type="evidence" value="ECO:0000270"/>
    <property type="project" value="TAIR"/>
</dbReference>
<dbReference type="GO" id="GO:0010214">
    <property type="term" value="P:seed coat development"/>
    <property type="evidence" value="ECO:0000270"/>
    <property type="project" value="TAIR"/>
</dbReference>
<evidence type="ECO:0000255" key="1"/>
<evidence type="ECO:0000256" key="2">
    <source>
        <dbReference type="SAM" id="MobiDB-lite"/>
    </source>
</evidence>
<evidence type="ECO:0000305" key="3"/>
<sequence length="153" mass="15463">MNATKFVVLLVISVLCAIVTARHVEEVSKETKLGTSLPKSTTKGIGAQLSAAGITSSSSDVYSSATGFNNPKGPDANAYENGYTSTSGQVIAKGRKARVSSASASTAKGDAKAAVTRKAAAARANGKVASASRVKGSSEKKKGKGKKGKGKKD</sequence>
<reference key="1">
    <citation type="journal article" date="2000" name="Nature">
        <title>Sequence and analysis of chromosome 1 of the plant Arabidopsis thaliana.</title>
        <authorList>
            <person name="Theologis A."/>
            <person name="Ecker J.R."/>
            <person name="Palm C.J."/>
            <person name="Federspiel N.A."/>
            <person name="Kaul S."/>
            <person name="White O."/>
            <person name="Alonso J."/>
            <person name="Altafi H."/>
            <person name="Araujo R."/>
            <person name="Bowman C.L."/>
            <person name="Brooks S.Y."/>
            <person name="Buehler E."/>
            <person name="Chan A."/>
            <person name="Chao Q."/>
            <person name="Chen H."/>
            <person name="Cheuk R.F."/>
            <person name="Chin C.W."/>
            <person name="Chung M.K."/>
            <person name="Conn L."/>
            <person name="Conway A.B."/>
            <person name="Conway A.R."/>
            <person name="Creasy T.H."/>
            <person name="Dewar K."/>
            <person name="Dunn P."/>
            <person name="Etgu P."/>
            <person name="Feldblyum T.V."/>
            <person name="Feng J.-D."/>
            <person name="Fong B."/>
            <person name="Fujii C.Y."/>
            <person name="Gill J.E."/>
            <person name="Goldsmith A.D."/>
            <person name="Haas B."/>
            <person name="Hansen N.F."/>
            <person name="Hughes B."/>
            <person name="Huizar L."/>
            <person name="Hunter J.L."/>
            <person name="Jenkins J."/>
            <person name="Johnson-Hopson C."/>
            <person name="Khan S."/>
            <person name="Khaykin E."/>
            <person name="Kim C.J."/>
            <person name="Koo H.L."/>
            <person name="Kremenetskaia I."/>
            <person name="Kurtz D.B."/>
            <person name="Kwan A."/>
            <person name="Lam B."/>
            <person name="Langin-Hooper S."/>
            <person name="Lee A."/>
            <person name="Lee J.M."/>
            <person name="Lenz C.A."/>
            <person name="Li J.H."/>
            <person name="Li Y.-P."/>
            <person name="Lin X."/>
            <person name="Liu S.X."/>
            <person name="Liu Z.A."/>
            <person name="Luros J.S."/>
            <person name="Maiti R."/>
            <person name="Marziali A."/>
            <person name="Militscher J."/>
            <person name="Miranda M."/>
            <person name="Nguyen M."/>
            <person name="Nierman W.C."/>
            <person name="Osborne B.I."/>
            <person name="Pai G."/>
            <person name="Peterson J."/>
            <person name="Pham P.K."/>
            <person name="Rizzo M."/>
            <person name="Rooney T."/>
            <person name="Rowley D."/>
            <person name="Sakano H."/>
            <person name="Salzberg S.L."/>
            <person name="Schwartz J.R."/>
            <person name="Shinn P."/>
            <person name="Southwick A.M."/>
            <person name="Sun H."/>
            <person name="Tallon L.J."/>
            <person name="Tambunga G."/>
            <person name="Toriumi M.J."/>
            <person name="Town C.D."/>
            <person name="Utterback T."/>
            <person name="Van Aken S."/>
            <person name="Vaysberg M."/>
            <person name="Vysotskaia V.S."/>
            <person name="Walker M."/>
            <person name="Wu D."/>
            <person name="Yu G."/>
            <person name="Fraser C.M."/>
            <person name="Venter J.C."/>
            <person name="Davis R.W."/>
        </authorList>
    </citation>
    <scope>NUCLEOTIDE SEQUENCE [LARGE SCALE GENOMIC DNA]</scope>
    <source>
        <strain>cv. Columbia</strain>
    </source>
</reference>
<reference key="2">
    <citation type="journal article" date="2017" name="Plant J.">
        <title>Araport11: a complete reannotation of the Arabidopsis thaliana reference genome.</title>
        <authorList>
            <person name="Cheng C.Y."/>
            <person name="Krishnakumar V."/>
            <person name="Chan A.P."/>
            <person name="Thibaud-Nissen F."/>
            <person name="Schobel S."/>
            <person name="Town C.D."/>
        </authorList>
    </citation>
    <scope>GENOME REANNOTATION</scope>
    <source>
        <strain>cv. Columbia</strain>
    </source>
</reference>
<reference key="3">
    <citation type="journal article" date="2003" name="Science">
        <title>Empirical analysis of transcriptional activity in the Arabidopsis genome.</title>
        <authorList>
            <person name="Yamada K."/>
            <person name="Lim J."/>
            <person name="Dale J.M."/>
            <person name="Chen H."/>
            <person name="Shinn P."/>
            <person name="Palm C.J."/>
            <person name="Southwick A.M."/>
            <person name="Wu H.C."/>
            <person name="Kim C.J."/>
            <person name="Nguyen M."/>
            <person name="Pham P.K."/>
            <person name="Cheuk R.F."/>
            <person name="Karlin-Newmann G."/>
            <person name="Liu S.X."/>
            <person name="Lam B."/>
            <person name="Sakano H."/>
            <person name="Wu T."/>
            <person name="Yu G."/>
            <person name="Miranda M."/>
            <person name="Quach H.L."/>
            <person name="Tripp M."/>
            <person name="Chang C.H."/>
            <person name="Lee J.M."/>
            <person name="Toriumi M.J."/>
            <person name="Chan M.M."/>
            <person name="Tang C.C."/>
            <person name="Onodera C.S."/>
            <person name="Deng J.M."/>
            <person name="Akiyama K."/>
            <person name="Ansari Y."/>
            <person name="Arakawa T."/>
            <person name="Banh J."/>
            <person name="Banno F."/>
            <person name="Bowser L."/>
            <person name="Brooks S.Y."/>
            <person name="Carninci P."/>
            <person name="Chao Q."/>
            <person name="Choy N."/>
            <person name="Enju A."/>
            <person name="Goldsmith A.D."/>
            <person name="Gurjal M."/>
            <person name="Hansen N.F."/>
            <person name="Hayashizaki Y."/>
            <person name="Johnson-Hopson C."/>
            <person name="Hsuan V.W."/>
            <person name="Iida K."/>
            <person name="Karnes M."/>
            <person name="Khan S."/>
            <person name="Koesema E."/>
            <person name="Ishida J."/>
            <person name="Jiang P.X."/>
            <person name="Jones T."/>
            <person name="Kawai J."/>
            <person name="Kamiya A."/>
            <person name="Meyers C."/>
            <person name="Nakajima M."/>
            <person name="Narusaka M."/>
            <person name="Seki M."/>
            <person name="Sakurai T."/>
            <person name="Satou M."/>
            <person name="Tamse R."/>
            <person name="Vaysberg M."/>
            <person name="Wallender E.K."/>
            <person name="Wong C."/>
            <person name="Yamamura Y."/>
            <person name="Yuan S."/>
            <person name="Shinozaki K."/>
            <person name="Davis R.W."/>
            <person name="Theologis A."/>
            <person name="Ecker J.R."/>
        </authorList>
    </citation>
    <scope>NUCLEOTIDE SEQUENCE [LARGE SCALE MRNA]</scope>
    <source>
        <strain>cv. Columbia</strain>
    </source>
</reference>
<reference key="4">
    <citation type="submission" date="2005-05" db="EMBL/GenBank/DDBJ databases">
        <title>Arabidopsis ORF clones.</title>
        <authorList>
            <person name="Kim C.J."/>
            <person name="Chen H."/>
            <person name="Cheuk R.F."/>
            <person name="Shinn P."/>
            <person name="Ecker J.R."/>
        </authorList>
    </citation>
    <scope>NUCLEOTIDE SEQUENCE [LARGE SCALE MRNA]</scope>
    <source>
        <strain>cv. Columbia</strain>
    </source>
</reference>